<keyword id="KW-1185">Reference proteome</keyword>
<keyword id="KW-0687">Ribonucleoprotein</keyword>
<keyword id="KW-0689">Ribosomal protein</keyword>
<keyword id="KW-0694">RNA-binding</keyword>
<keyword id="KW-0699">rRNA-binding</keyword>
<reference key="1">
    <citation type="journal article" date="2000" name="Nature">
        <title>The complete sequence of the mucosal pathogen Ureaplasma urealyticum.</title>
        <authorList>
            <person name="Glass J.I."/>
            <person name="Lefkowitz E.J."/>
            <person name="Glass J.S."/>
            <person name="Heiner C.R."/>
            <person name="Chen E.Y."/>
            <person name="Cassell G.H."/>
        </authorList>
    </citation>
    <scope>NUCLEOTIDE SEQUENCE [LARGE SCALE GENOMIC DNA]</scope>
    <source>
        <strain>ATCC 700970</strain>
    </source>
</reference>
<protein>
    <recommendedName>
        <fullName evidence="1">Small ribosomal subunit protein uS3</fullName>
    </recommendedName>
    <alternativeName>
        <fullName evidence="3">30S ribosomal protein S3</fullName>
    </alternativeName>
</protein>
<name>RS3_UREPA</name>
<comment type="function">
    <text evidence="1">Binds the lower part of the 30S subunit head. Binds mRNA in the 70S ribosome, positioning it for translation.</text>
</comment>
<comment type="subunit">
    <text evidence="1">Part of the 30S ribosomal subunit. Forms a tight complex with proteins S10 and S14.</text>
</comment>
<comment type="similarity">
    <text evidence="1">Belongs to the universal ribosomal protein uS3 family.</text>
</comment>
<evidence type="ECO:0000255" key="1">
    <source>
        <dbReference type="HAMAP-Rule" id="MF_01309"/>
    </source>
</evidence>
<evidence type="ECO:0000256" key="2">
    <source>
        <dbReference type="SAM" id="MobiDB-lite"/>
    </source>
</evidence>
<evidence type="ECO:0000305" key="3"/>
<sequence>MGQKVNPNGLRFGINKQWLSRWVPTDQLQMAKWLVEDDKIRKYLSTKYKNAGIDHVEIERDQQRVNVYVYAVQSGLLIGTEASEKKLIELAINKIVGRKQLVSLKVVEVQIPELQASLMAREIADAIENRVSFRIAQKMVIKKVLKAGARGIKTHVSGRLGGVEMAREEGYTQGVMTLHTLRADIDYSMQEAHTTYGIIGVKVWINRGELFGNKLVNSVAHAANKEFSRSSKPKKGSFNRSSRSKNTKPAPKQAVSE</sequence>
<proteinExistence type="inferred from homology"/>
<accession>Q9PQQ4</accession>
<dbReference type="EMBL" id="AF222894">
    <property type="protein sequence ID" value="AAF30646.1"/>
    <property type="molecule type" value="Genomic_DNA"/>
</dbReference>
<dbReference type="RefSeq" id="WP_004026040.1">
    <property type="nucleotide sequence ID" value="NC_002162.1"/>
</dbReference>
<dbReference type="SMR" id="Q9PQQ4"/>
<dbReference type="STRING" id="273119.UU237"/>
<dbReference type="EnsemblBacteria" id="AAF30646">
    <property type="protein sequence ID" value="AAF30646"/>
    <property type="gene ID" value="UU237"/>
</dbReference>
<dbReference type="GeneID" id="93848712"/>
<dbReference type="KEGG" id="uur:UU237"/>
<dbReference type="eggNOG" id="COG0092">
    <property type="taxonomic scope" value="Bacteria"/>
</dbReference>
<dbReference type="HOGENOM" id="CLU_058591_0_2_14"/>
<dbReference type="OrthoDB" id="9806396at2"/>
<dbReference type="Proteomes" id="UP000000423">
    <property type="component" value="Chromosome"/>
</dbReference>
<dbReference type="GO" id="GO:0022627">
    <property type="term" value="C:cytosolic small ribosomal subunit"/>
    <property type="evidence" value="ECO:0007669"/>
    <property type="project" value="TreeGrafter"/>
</dbReference>
<dbReference type="GO" id="GO:0003729">
    <property type="term" value="F:mRNA binding"/>
    <property type="evidence" value="ECO:0007669"/>
    <property type="project" value="UniProtKB-UniRule"/>
</dbReference>
<dbReference type="GO" id="GO:0019843">
    <property type="term" value="F:rRNA binding"/>
    <property type="evidence" value="ECO:0007669"/>
    <property type="project" value="UniProtKB-UniRule"/>
</dbReference>
<dbReference type="GO" id="GO:0003735">
    <property type="term" value="F:structural constituent of ribosome"/>
    <property type="evidence" value="ECO:0007669"/>
    <property type="project" value="InterPro"/>
</dbReference>
<dbReference type="GO" id="GO:0006412">
    <property type="term" value="P:translation"/>
    <property type="evidence" value="ECO:0007669"/>
    <property type="project" value="UniProtKB-UniRule"/>
</dbReference>
<dbReference type="CDD" id="cd02412">
    <property type="entry name" value="KH-II_30S_S3"/>
    <property type="match status" value="1"/>
</dbReference>
<dbReference type="FunFam" id="3.30.300.20:FF:000001">
    <property type="entry name" value="30S ribosomal protein S3"/>
    <property type="match status" value="1"/>
</dbReference>
<dbReference type="Gene3D" id="3.30.300.20">
    <property type="match status" value="1"/>
</dbReference>
<dbReference type="Gene3D" id="3.30.1140.32">
    <property type="entry name" value="Ribosomal protein S3, C-terminal domain"/>
    <property type="match status" value="1"/>
</dbReference>
<dbReference type="HAMAP" id="MF_01309_B">
    <property type="entry name" value="Ribosomal_uS3_B"/>
    <property type="match status" value="1"/>
</dbReference>
<dbReference type="InterPro" id="IPR004087">
    <property type="entry name" value="KH_dom"/>
</dbReference>
<dbReference type="InterPro" id="IPR015946">
    <property type="entry name" value="KH_dom-like_a/b"/>
</dbReference>
<dbReference type="InterPro" id="IPR004044">
    <property type="entry name" value="KH_dom_type_2"/>
</dbReference>
<dbReference type="InterPro" id="IPR009019">
    <property type="entry name" value="KH_sf_prok-type"/>
</dbReference>
<dbReference type="InterPro" id="IPR036419">
    <property type="entry name" value="Ribosomal_S3_C_sf"/>
</dbReference>
<dbReference type="InterPro" id="IPR005704">
    <property type="entry name" value="Ribosomal_uS3_bac-typ"/>
</dbReference>
<dbReference type="InterPro" id="IPR001351">
    <property type="entry name" value="Ribosomal_uS3_C"/>
</dbReference>
<dbReference type="InterPro" id="IPR018280">
    <property type="entry name" value="Ribosomal_uS3_CS"/>
</dbReference>
<dbReference type="NCBIfam" id="TIGR01009">
    <property type="entry name" value="rpsC_bact"/>
    <property type="match status" value="1"/>
</dbReference>
<dbReference type="PANTHER" id="PTHR11760">
    <property type="entry name" value="30S/40S RIBOSOMAL PROTEIN S3"/>
    <property type="match status" value="1"/>
</dbReference>
<dbReference type="PANTHER" id="PTHR11760:SF19">
    <property type="entry name" value="SMALL RIBOSOMAL SUBUNIT PROTEIN US3C"/>
    <property type="match status" value="1"/>
</dbReference>
<dbReference type="Pfam" id="PF07650">
    <property type="entry name" value="KH_2"/>
    <property type="match status" value="1"/>
</dbReference>
<dbReference type="Pfam" id="PF00189">
    <property type="entry name" value="Ribosomal_S3_C"/>
    <property type="match status" value="1"/>
</dbReference>
<dbReference type="SMART" id="SM00322">
    <property type="entry name" value="KH"/>
    <property type="match status" value="1"/>
</dbReference>
<dbReference type="SUPFAM" id="SSF54814">
    <property type="entry name" value="Prokaryotic type KH domain (KH-domain type II)"/>
    <property type="match status" value="1"/>
</dbReference>
<dbReference type="SUPFAM" id="SSF54821">
    <property type="entry name" value="Ribosomal protein S3 C-terminal domain"/>
    <property type="match status" value="1"/>
</dbReference>
<dbReference type="PROSITE" id="PS50823">
    <property type="entry name" value="KH_TYPE_2"/>
    <property type="match status" value="1"/>
</dbReference>
<dbReference type="PROSITE" id="PS00548">
    <property type="entry name" value="RIBOSOMAL_S3"/>
    <property type="match status" value="1"/>
</dbReference>
<gene>
    <name evidence="1" type="primary">rpsC</name>
    <name evidence="1" type="synonym">rps3</name>
    <name type="ordered locus">UU237</name>
</gene>
<organism>
    <name type="scientific">Ureaplasma parvum serovar 3 (strain ATCC 700970)</name>
    <dbReference type="NCBI Taxonomy" id="273119"/>
    <lineage>
        <taxon>Bacteria</taxon>
        <taxon>Bacillati</taxon>
        <taxon>Mycoplasmatota</taxon>
        <taxon>Mycoplasmoidales</taxon>
        <taxon>Mycoplasmoidaceae</taxon>
        <taxon>Ureaplasma</taxon>
    </lineage>
</organism>
<feature type="chain" id="PRO_0000130229" description="Small ribosomal subunit protein uS3">
    <location>
        <begin position="1"/>
        <end position="257"/>
    </location>
</feature>
<feature type="domain" description="KH type-2" evidence="1">
    <location>
        <begin position="40"/>
        <end position="110"/>
    </location>
</feature>
<feature type="region of interest" description="Disordered" evidence="2">
    <location>
        <begin position="223"/>
        <end position="257"/>
    </location>
</feature>
<feature type="compositionally biased region" description="Basic residues" evidence="2">
    <location>
        <begin position="231"/>
        <end position="246"/>
    </location>
</feature>